<gene>
    <name type="primary">Lbx1</name>
    <name type="synonym">Lbx1h</name>
</gene>
<evidence type="ECO:0000255" key="1">
    <source>
        <dbReference type="PROSITE-ProRule" id="PRU00108"/>
    </source>
</evidence>
<evidence type="ECO:0000256" key="2">
    <source>
        <dbReference type="SAM" id="MobiDB-lite"/>
    </source>
</evidence>
<evidence type="ECO:0000269" key="3">
    <source>
    </source>
</evidence>
<evidence type="ECO:0000269" key="4">
    <source>
    </source>
</evidence>
<evidence type="ECO:0000269" key="5">
    <source>
    </source>
</evidence>
<evidence type="ECO:0000269" key="6">
    <source>
    </source>
</evidence>
<evidence type="ECO:0000269" key="7">
    <source>
    </source>
</evidence>
<evidence type="ECO:0000305" key="8"/>
<accession>P52955</accession>
<accession>Q3UN09</accession>
<accession>Q80XA3</accession>
<name>LBX1_MOUSE</name>
<protein>
    <recommendedName>
        <fullName>Transcription factor LBX1</fullName>
    </recommendedName>
    <alternativeName>
        <fullName>Ladybird homeobox protein homolog 1</fullName>
    </alternativeName>
</protein>
<keyword id="KW-0217">Developmental protein</keyword>
<keyword id="KW-0221">Differentiation</keyword>
<keyword id="KW-0238">DNA-binding</keyword>
<keyword id="KW-0371">Homeobox</keyword>
<keyword id="KW-0517">Myogenesis</keyword>
<keyword id="KW-0524">Neurogenesis</keyword>
<keyword id="KW-0539">Nucleus</keyword>
<keyword id="KW-1185">Reference proteome</keyword>
<keyword id="KW-0804">Transcription</keyword>
<keyword id="KW-0805">Transcription regulation</keyword>
<proteinExistence type="evidence at protein level"/>
<comment type="function">
    <text evidence="3 4 6">Transcription factor required for the development of GABAergic interneurons in the dorsal horn of the spinal cord and migration and further development of hypaxial muscle precursor cells for limb muscles, diaphragm and hypoglossal cord.</text>
</comment>
<comment type="subunit">
    <text evidence="5">Interacts with SKOR1 which acts as a transcriptional corepressor.</text>
</comment>
<comment type="interaction">
    <interactant intactId="EBI-604594">
        <id>P52955</id>
    </interactant>
    <interactant intactId="EBI-604451">
        <id>Q8BX46</id>
        <label>Skor1</label>
    </interactant>
    <organismsDiffer>false</organismsDiffer>
    <experiments>2</experiments>
</comment>
<comment type="subcellular location">
    <subcellularLocation>
        <location evidence="8">Nucleus</location>
    </subcellularLocation>
</comment>
<comment type="tissue specificity">
    <text evidence="7">Expressed in the dorsal part of the spinal cord and hindbrain and in presumptive myogenic cells in lateral regions of differentiating somites.</text>
</comment>
<comment type="developmental stage">
    <text evidence="7">Expressed in the developing central nervous system from 10.5 dpc to 16.5 dpc. Expressed in presumptive myogenic cells from 9.5 dpc until 16.5 dpc with highest levels at 10.5-11.5 dpc.</text>
</comment>
<comment type="disruption phenotype">
    <text evidence="3">Death at birth. Mice fail to expand their lungs and do not move their abnormally thin limbs.</text>
</comment>
<comment type="sequence caution" evidence="8">
    <conflict type="erroneous initiation">
        <sequence resource="EMBL-CDS" id="BAE25939"/>
    </conflict>
</comment>
<feature type="chain" id="PRO_0000049167" description="Transcription factor LBX1">
    <location>
        <begin position="1"/>
        <end position="282"/>
    </location>
</feature>
<feature type="DNA-binding region" description="Homeobox" evidence="1">
    <location>
        <begin position="125"/>
        <end position="184"/>
    </location>
</feature>
<feature type="region of interest" description="Disordered" evidence="2">
    <location>
        <begin position="1"/>
        <end position="36"/>
    </location>
</feature>
<feature type="region of interest" description="Disordered" evidence="2">
    <location>
        <begin position="210"/>
        <end position="282"/>
    </location>
</feature>
<feature type="compositionally biased region" description="Basic and acidic residues" evidence="2">
    <location>
        <begin position="1"/>
        <end position="20"/>
    </location>
</feature>
<feature type="compositionally biased region" description="Gly residues" evidence="2">
    <location>
        <begin position="218"/>
        <end position="227"/>
    </location>
</feature>
<feature type="compositionally biased region" description="Acidic residues" evidence="2">
    <location>
        <begin position="269"/>
        <end position="282"/>
    </location>
</feature>
<feature type="sequence conflict" description="In Ref. 1; CAA62343." evidence="8" ref="1">
    <original>LTPFSIEDILNKPSVRRSYSLCGAAHLLAAADKHAPGGLP</original>
    <variation>YAVQHRGHPQQAVRAEKLLAVWGGAPAGGRGQARAGRLA</variation>
    <location>
        <begin position="33"/>
        <end position="72"/>
    </location>
</feature>
<feature type="sequence conflict" description="In Ref. 1; CAA62343." evidence="8" ref="1">
    <location>
        <position position="225"/>
    </location>
</feature>
<reference key="1">
    <citation type="journal article" date="1995" name="Mech. Dev.">
        <title>Mouse Lbx1 and human LBX1 define a novel mammalian homeobox gene family related to the Drosophila lady bird genes.</title>
        <authorList>
            <person name="Jagla K."/>
            <person name="Dolle P."/>
            <person name="Mattei M.-G."/>
            <person name="Jagla T."/>
            <person name="Schuhbaur B."/>
            <person name="Dretzen G."/>
            <person name="Bellard F."/>
            <person name="Bellard M."/>
        </authorList>
    </citation>
    <scope>NUCLEOTIDE SEQUENCE [MRNA]</scope>
    <scope>TISSUE SPECIFICITY</scope>
    <scope>DEVELOPMENTAL STAGE</scope>
    <source>
        <strain>BALB/cJ</strain>
    </source>
</reference>
<reference key="2">
    <citation type="submission" date="1996-10" db="EMBL/GenBank/DDBJ databases">
        <authorList>
            <person name="Jagla K."/>
        </authorList>
    </citation>
    <scope>SEQUENCE REVISION</scope>
</reference>
<reference key="3">
    <citation type="submission" date="2003-04" db="EMBL/GenBank/DDBJ databases">
        <title>Mouse homeobox gene Lbx1 in myogenesis.</title>
        <authorList>
            <person name="Kurose T."/>
            <person name="Endo T."/>
        </authorList>
    </citation>
    <scope>NUCLEOTIDE SEQUENCE [MRNA]</scope>
    <source>
        <strain>ICR</strain>
    </source>
</reference>
<reference key="4">
    <citation type="journal article" date="2004" name="Genome Res.">
        <title>The status, quality, and expansion of the NIH full-length cDNA project: the Mammalian Gene Collection (MGC).</title>
        <authorList>
            <consortium name="The MGC Project Team"/>
        </authorList>
    </citation>
    <scope>NUCLEOTIDE SEQUENCE [LARGE SCALE MRNA]</scope>
    <source>
        <tissue>Brain</tissue>
    </source>
</reference>
<reference key="5">
    <citation type="journal article" date="2005" name="Science">
        <title>The transcriptional landscape of the mammalian genome.</title>
        <authorList>
            <person name="Carninci P."/>
            <person name="Kasukawa T."/>
            <person name="Katayama S."/>
            <person name="Gough J."/>
            <person name="Frith M.C."/>
            <person name="Maeda N."/>
            <person name="Oyama R."/>
            <person name="Ravasi T."/>
            <person name="Lenhard B."/>
            <person name="Wells C."/>
            <person name="Kodzius R."/>
            <person name="Shimokawa K."/>
            <person name="Bajic V.B."/>
            <person name="Brenner S.E."/>
            <person name="Batalov S."/>
            <person name="Forrest A.R."/>
            <person name="Zavolan M."/>
            <person name="Davis M.J."/>
            <person name="Wilming L.G."/>
            <person name="Aidinis V."/>
            <person name="Allen J.E."/>
            <person name="Ambesi-Impiombato A."/>
            <person name="Apweiler R."/>
            <person name="Aturaliya R.N."/>
            <person name="Bailey T.L."/>
            <person name="Bansal M."/>
            <person name="Baxter L."/>
            <person name="Beisel K.W."/>
            <person name="Bersano T."/>
            <person name="Bono H."/>
            <person name="Chalk A.M."/>
            <person name="Chiu K.P."/>
            <person name="Choudhary V."/>
            <person name="Christoffels A."/>
            <person name="Clutterbuck D.R."/>
            <person name="Crowe M.L."/>
            <person name="Dalla E."/>
            <person name="Dalrymple B.P."/>
            <person name="de Bono B."/>
            <person name="Della Gatta G."/>
            <person name="di Bernardo D."/>
            <person name="Down T."/>
            <person name="Engstrom P."/>
            <person name="Fagiolini M."/>
            <person name="Faulkner G."/>
            <person name="Fletcher C.F."/>
            <person name="Fukushima T."/>
            <person name="Furuno M."/>
            <person name="Futaki S."/>
            <person name="Gariboldi M."/>
            <person name="Georgii-Hemming P."/>
            <person name="Gingeras T.R."/>
            <person name="Gojobori T."/>
            <person name="Green R.E."/>
            <person name="Gustincich S."/>
            <person name="Harbers M."/>
            <person name="Hayashi Y."/>
            <person name="Hensch T.K."/>
            <person name="Hirokawa N."/>
            <person name="Hill D."/>
            <person name="Huminiecki L."/>
            <person name="Iacono M."/>
            <person name="Ikeo K."/>
            <person name="Iwama A."/>
            <person name="Ishikawa T."/>
            <person name="Jakt M."/>
            <person name="Kanapin A."/>
            <person name="Katoh M."/>
            <person name="Kawasawa Y."/>
            <person name="Kelso J."/>
            <person name="Kitamura H."/>
            <person name="Kitano H."/>
            <person name="Kollias G."/>
            <person name="Krishnan S.P."/>
            <person name="Kruger A."/>
            <person name="Kummerfeld S.K."/>
            <person name="Kurochkin I.V."/>
            <person name="Lareau L.F."/>
            <person name="Lazarevic D."/>
            <person name="Lipovich L."/>
            <person name="Liu J."/>
            <person name="Liuni S."/>
            <person name="McWilliam S."/>
            <person name="Madan Babu M."/>
            <person name="Madera M."/>
            <person name="Marchionni L."/>
            <person name="Matsuda H."/>
            <person name="Matsuzawa S."/>
            <person name="Miki H."/>
            <person name="Mignone F."/>
            <person name="Miyake S."/>
            <person name="Morris K."/>
            <person name="Mottagui-Tabar S."/>
            <person name="Mulder N."/>
            <person name="Nakano N."/>
            <person name="Nakauchi H."/>
            <person name="Ng P."/>
            <person name="Nilsson R."/>
            <person name="Nishiguchi S."/>
            <person name="Nishikawa S."/>
            <person name="Nori F."/>
            <person name="Ohara O."/>
            <person name="Okazaki Y."/>
            <person name="Orlando V."/>
            <person name="Pang K.C."/>
            <person name="Pavan W.J."/>
            <person name="Pavesi G."/>
            <person name="Pesole G."/>
            <person name="Petrovsky N."/>
            <person name="Piazza S."/>
            <person name="Reed J."/>
            <person name="Reid J.F."/>
            <person name="Ring B.Z."/>
            <person name="Ringwald M."/>
            <person name="Rost B."/>
            <person name="Ruan Y."/>
            <person name="Salzberg S.L."/>
            <person name="Sandelin A."/>
            <person name="Schneider C."/>
            <person name="Schoenbach C."/>
            <person name="Sekiguchi K."/>
            <person name="Semple C.A."/>
            <person name="Seno S."/>
            <person name="Sessa L."/>
            <person name="Sheng Y."/>
            <person name="Shibata Y."/>
            <person name="Shimada H."/>
            <person name="Shimada K."/>
            <person name="Silva D."/>
            <person name="Sinclair B."/>
            <person name="Sperling S."/>
            <person name="Stupka E."/>
            <person name="Sugiura K."/>
            <person name="Sultana R."/>
            <person name="Takenaka Y."/>
            <person name="Taki K."/>
            <person name="Tammoja K."/>
            <person name="Tan S.L."/>
            <person name="Tang S."/>
            <person name="Taylor M.S."/>
            <person name="Tegner J."/>
            <person name="Teichmann S.A."/>
            <person name="Ueda H.R."/>
            <person name="van Nimwegen E."/>
            <person name="Verardo R."/>
            <person name="Wei C.L."/>
            <person name="Yagi K."/>
            <person name="Yamanishi H."/>
            <person name="Zabarovsky E."/>
            <person name="Zhu S."/>
            <person name="Zimmer A."/>
            <person name="Hide W."/>
            <person name="Bult C."/>
            <person name="Grimmond S.M."/>
            <person name="Teasdale R.D."/>
            <person name="Liu E.T."/>
            <person name="Brusic V."/>
            <person name="Quackenbush J."/>
            <person name="Wahlestedt C."/>
            <person name="Mattick J.S."/>
            <person name="Hume D.A."/>
            <person name="Kai C."/>
            <person name="Sasaki D."/>
            <person name="Tomaru Y."/>
            <person name="Fukuda S."/>
            <person name="Kanamori-Katayama M."/>
            <person name="Suzuki M."/>
            <person name="Aoki J."/>
            <person name="Arakawa T."/>
            <person name="Iida J."/>
            <person name="Imamura K."/>
            <person name="Itoh M."/>
            <person name="Kato T."/>
            <person name="Kawaji H."/>
            <person name="Kawagashira N."/>
            <person name="Kawashima T."/>
            <person name="Kojima M."/>
            <person name="Kondo S."/>
            <person name="Konno H."/>
            <person name="Nakano K."/>
            <person name="Ninomiya N."/>
            <person name="Nishio T."/>
            <person name="Okada M."/>
            <person name="Plessy C."/>
            <person name="Shibata K."/>
            <person name="Shiraki T."/>
            <person name="Suzuki S."/>
            <person name="Tagami M."/>
            <person name="Waki K."/>
            <person name="Watahiki A."/>
            <person name="Okamura-Oho Y."/>
            <person name="Suzuki H."/>
            <person name="Kawai J."/>
            <person name="Hayashizaki Y."/>
        </authorList>
    </citation>
    <scope>NUCLEOTIDE SEQUENCE [LARGE SCALE MRNA] OF 50-282</scope>
    <source>
        <strain>C57BL/6J</strain>
        <tissue>Medulla oblongata</tissue>
    </source>
</reference>
<reference key="6">
    <citation type="journal article" date="2000" name="Development">
        <title>The role of Lbx1 in migration of muscle precursor cells.</title>
        <authorList>
            <person name="Brohmann H."/>
            <person name="Jagla K."/>
            <person name="Birchmeier C."/>
        </authorList>
    </citation>
    <scope>FUNCTION</scope>
    <scope>DISRUPTION PHENOTYPE</scope>
</reference>
<reference key="7">
    <citation type="journal article" date="2002" name="Neuron">
        <title>The homeodomain factor lbx1 distinguishes two major programs of neuronal differentiation in the dorsal spinal cord.</title>
        <authorList>
            <person name="Muller T."/>
            <person name="Brohmann H."/>
            <person name="Pierani A."/>
            <person name="Heppenstall P.A."/>
            <person name="Lewin G.R."/>
            <person name="Jessell T.M."/>
            <person name="Birchmeier C."/>
        </authorList>
    </citation>
    <scope>FUNCTION</scope>
</reference>
<reference key="8">
    <citation type="journal article" date="2005" name="J. Biol. Chem.">
        <title>Corl1, a novel neuronal lineage-specific transcriptional corepressor for the homeodomain transcription factor Lbx1.</title>
        <authorList>
            <person name="Mizuhara E."/>
            <person name="Nakatani T."/>
            <person name="Minaki Y."/>
            <person name="Sakamoto Y."/>
            <person name="Ono Y."/>
        </authorList>
    </citation>
    <scope>INTERACTION WITH SKOR1</scope>
</reference>
<reference key="9">
    <citation type="journal article" date="2005" name="Nat. Neurosci.">
        <title>Lbx1 and Tlx3 are opposing switches in determining GABAergic versus glutamatergic transmitter phenotypes.</title>
        <authorList>
            <person name="Cheng L."/>
            <person name="Samad O.A."/>
            <person name="Xu Y."/>
            <person name="Mizuguchi R."/>
            <person name="Luo P."/>
            <person name="Shirasawa S."/>
            <person name="Goulding M."/>
            <person name="Ma Q."/>
        </authorList>
    </citation>
    <scope>FUNCTION</scope>
</reference>
<sequence>MTSKEDGKAAPGEERRRSPLDHLPPPANSNKPLTPFSIEDILNKPSVRRSYSLCGAAHLLAAADKHAPGGLPLAGRALLSQTSPLCALEELASKTFKGLEVSVLQAAEGRDGMTIFGQRQTPKKRRKSRTAFTNHQIYELEKRFLYQKYLSPADRDQIAQQLGLTNAQVITWFQNRRAKLKRDLEEMKADVESAKKLGPSGQMDIVALAELEQNSEASGGGGGGGCGRAKSRPGSPALPPGAPQAPGGGPLQLSPASPLTDQRASSQDCSEDEEDEEIDVDD</sequence>
<dbReference type="EMBL" id="X90829">
    <property type="protein sequence ID" value="CAA62343.1"/>
    <property type="molecule type" value="mRNA"/>
</dbReference>
<dbReference type="EMBL" id="AB108497">
    <property type="protein sequence ID" value="BAC75634.1"/>
    <property type="molecule type" value="mRNA"/>
</dbReference>
<dbReference type="EMBL" id="BC119177">
    <property type="protein sequence ID" value="AAI19178.1"/>
    <property type="molecule type" value="mRNA"/>
</dbReference>
<dbReference type="EMBL" id="BC120586">
    <property type="protein sequence ID" value="AAI20587.1"/>
    <property type="molecule type" value="mRNA"/>
</dbReference>
<dbReference type="EMBL" id="AK144562">
    <property type="protein sequence ID" value="BAE25939.1"/>
    <property type="status" value="ALT_INIT"/>
    <property type="molecule type" value="mRNA"/>
</dbReference>
<dbReference type="CCDS" id="CCDS29859.1"/>
<dbReference type="RefSeq" id="NP_034821.2">
    <property type="nucleotide sequence ID" value="NM_010691.5"/>
</dbReference>
<dbReference type="RefSeq" id="XP_006526785.1">
    <property type="nucleotide sequence ID" value="XM_006526722.3"/>
</dbReference>
<dbReference type="SMR" id="P52955"/>
<dbReference type="BioGRID" id="201117">
    <property type="interactions" value="2"/>
</dbReference>
<dbReference type="FunCoup" id="P52955">
    <property type="interactions" value="125"/>
</dbReference>
<dbReference type="IntAct" id="P52955">
    <property type="interactions" value="2"/>
</dbReference>
<dbReference type="STRING" id="10090.ENSMUSP00000096997"/>
<dbReference type="iPTMnet" id="P52955"/>
<dbReference type="PhosphoSitePlus" id="P52955"/>
<dbReference type="PaxDb" id="10090-ENSMUSP00000096997"/>
<dbReference type="ProteomicsDB" id="263702"/>
<dbReference type="Antibodypedia" id="911">
    <property type="antibodies" value="175 antibodies from 26 providers"/>
</dbReference>
<dbReference type="DNASU" id="16814"/>
<dbReference type="Ensembl" id="ENSMUST00000099401.6">
    <property type="protein sequence ID" value="ENSMUSP00000096997.5"/>
    <property type="gene ID" value="ENSMUSG00000025216.10"/>
</dbReference>
<dbReference type="GeneID" id="16814"/>
<dbReference type="KEGG" id="mmu:16814"/>
<dbReference type="UCSC" id="uc008hqv.1">
    <property type="organism name" value="mouse"/>
</dbReference>
<dbReference type="AGR" id="MGI:104867"/>
<dbReference type="CTD" id="10660"/>
<dbReference type="MGI" id="MGI:104867">
    <property type="gene designation" value="Lbx1"/>
</dbReference>
<dbReference type="VEuPathDB" id="HostDB:ENSMUSG00000025216"/>
<dbReference type="eggNOG" id="KOG0488">
    <property type="taxonomic scope" value="Eukaryota"/>
</dbReference>
<dbReference type="GeneTree" id="ENSGT00940000161756"/>
<dbReference type="HOGENOM" id="CLU_086390_0_0_1"/>
<dbReference type="InParanoid" id="P52955"/>
<dbReference type="OMA" id="THPKHGL"/>
<dbReference type="OrthoDB" id="6159439at2759"/>
<dbReference type="PhylomeDB" id="P52955"/>
<dbReference type="TreeFam" id="TF325047"/>
<dbReference type="BioGRID-ORCS" id="16814">
    <property type="hits" value="1 hit in 76 CRISPR screens"/>
</dbReference>
<dbReference type="ChiTaRS" id="Lbx1">
    <property type="organism name" value="mouse"/>
</dbReference>
<dbReference type="PRO" id="PR:P52955"/>
<dbReference type="Proteomes" id="UP000000589">
    <property type="component" value="Chromosome 19"/>
</dbReference>
<dbReference type="RNAct" id="P52955">
    <property type="molecule type" value="protein"/>
</dbReference>
<dbReference type="Bgee" id="ENSMUSG00000025216">
    <property type="expression patterns" value="Expressed in triceps brachii and 64 other cell types or tissues"/>
</dbReference>
<dbReference type="GO" id="GO:0005634">
    <property type="term" value="C:nucleus"/>
    <property type="evidence" value="ECO:0007669"/>
    <property type="project" value="UniProtKB-SubCell"/>
</dbReference>
<dbReference type="GO" id="GO:0005667">
    <property type="term" value="C:transcription regulator complex"/>
    <property type="evidence" value="ECO:0000314"/>
    <property type="project" value="MGI"/>
</dbReference>
<dbReference type="GO" id="GO:0003677">
    <property type="term" value="F:DNA binding"/>
    <property type="evidence" value="ECO:0007669"/>
    <property type="project" value="UniProtKB-KW"/>
</dbReference>
<dbReference type="GO" id="GO:0003700">
    <property type="term" value="F:DNA-binding transcription factor activity"/>
    <property type="evidence" value="ECO:0000314"/>
    <property type="project" value="MGI"/>
</dbReference>
<dbReference type="GO" id="GO:0000981">
    <property type="term" value="F:DNA-binding transcription factor activity, RNA polymerase II-specific"/>
    <property type="evidence" value="ECO:0007669"/>
    <property type="project" value="InterPro"/>
</dbReference>
<dbReference type="GO" id="GO:0008283">
    <property type="term" value="P:cell population proliferation"/>
    <property type="evidence" value="ECO:0000315"/>
    <property type="project" value="MGI"/>
</dbReference>
<dbReference type="GO" id="GO:1905962">
    <property type="term" value="P:glutamatergic neuron differentiation"/>
    <property type="evidence" value="ECO:0000315"/>
    <property type="project" value="MGI"/>
</dbReference>
<dbReference type="GO" id="GO:0001947">
    <property type="term" value="P:heart looping"/>
    <property type="evidence" value="ECO:0000315"/>
    <property type="project" value="MGI"/>
</dbReference>
<dbReference type="GO" id="GO:0007517">
    <property type="term" value="P:muscle organ development"/>
    <property type="evidence" value="ECO:0007669"/>
    <property type="project" value="UniProtKB-KW"/>
</dbReference>
<dbReference type="GO" id="GO:0008285">
    <property type="term" value="P:negative regulation of cell population proliferation"/>
    <property type="evidence" value="ECO:0000315"/>
    <property type="project" value="MGI"/>
</dbReference>
<dbReference type="GO" id="GO:0120007">
    <property type="term" value="P:negative regulation of glutamatergic neuron differentiation"/>
    <property type="evidence" value="ECO:0000315"/>
    <property type="project" value="MGI"/>
</dbReference>
<dbReference type="GO" id="GO:0048663">
    <property type="term" value="P:neuron fate commitment"/>
    <property type="evidence" value="ECO:0000315"/>
    <property type="project" value="MGI"/>
</dbReference>
<dbReference type="GO" id="GO:0048664">
    <property type="term" value="P:neuron fate determination"/>
    <property type="evidence" value="ECO:0000315"/>
    <property type="project" value="MGI"/>
</dbReference>
<dbReference type="GO" id="GO:0006355">
    <property type="term" value="P:regulation of DNA-templated transcription"/>
    <property type="evidence" value="ECO:0000314"/>
    <property type="project" value="MGI"/>
</dbReference>
<dbReference type="GO" id="GO:0006357">
    <property type="term" value="P:regulation of transcription by RNA polymerase II"/>
    <property type="evidence" value="ECO:0000315"/>
    <property type="project" value="MGI"/>
</dbReference>
<dbReference type="GO" id="GO:0021522">
    <property type="term" value="P:spinal cord motor neuron differentiation"/>
    <property type="evidence" value="ECO:0000316"/>
    <property type="project" value="MGI"/>
</dbReference>
<dbReference type="CDD" id="cd00086">
    <property type="entry name" value="homeodomain"/>
    <property type="match status" value="1"/>
</dbReference>
<dbReference type="FunFam" id="1.10.10.60:FF:000098">
    <property type="entry name" value="Transcription factor LBX1"/>
    <property type="match status" value="1"/>
</dbReference>
<dbReference type="Gene3D" id="1.10.10.60">
    <property type="entry name" value="Homeodomain-like"/>
    <property type="match status" value="1"/>
</dbReference>
<dbReference type="InterPro" id="IPR001356">
    <property type="entry name" value="HD"/>
</dbReference>
<dbReference type="InterPro" id="IPR017970">
    <property type="entry name" value="Homeobox_CS"/>
</dbReference>
<dbReference type="InterPro" id="IPR009057">
    <property type="entry name" value="Homeodomain-like_sf"/>
</dbReference>
<dbReference type="InterPro" id="IPR000047">
    <property type="entry name" value="HTH_motif"/>
</dbReference>
<dbReference type="InterPro" id="IPR051892">
    <property type="entry name" value="LBX_TF"/>
</dbReference>
<dbReference type="PANTHER" id="PTHR24336">
    <property type="entry name" value="TRANSCRIPTION FACTOR LBX"/>
    <property type="match status" value="1"/>
</dbReference>
<dbReference type="PANTHER" id="PTHR24336:SF9">
    <property type="entry name" value="TRANSCRIPTION FACTOR LBX1"/>
    <property type="match status" value="1"/>
</dbReference>
<dbReference type="Pfam" id="PF00046">
    <property type="entry name" value="Homeodomain"/>
    <property type="match status" value="1"/>
</dbReference>
<dbReference type="PRINTS" id="PR00031">
    <property type="entry name" value="HTHREPRESSR"/>
</dbReference>
<dbReference type="SMART" id="SM00389">
    <property type="entry name" value="HOX"/>
    <property type="match status" value="1"/>
</dbReference>
<dbReference type="SUPFAM" id="SSF46689">
    <property type="entry name" value="Homeodomain-like"/>
    <property type="match status" value="1"/>
</dbReference>
<dbReference type="PROSITE" id="PS00027">
    <property type="entry name" value="HOMEOBOX_1"/>
    <property type="match status" value="1"/>
</dbReference>
<dbReference type="PROSITE" id="PS50071">
    <property type="entry name" value="HOMEOBOX_2"/>
    <property type="match status" value="1"/>
</dbReference>
<organism>
    <name type="scientific">Mus musculus</name>
    <name type="common">Mouse</name>
    <dbReference type="NCBI Taxonomy" id="10090"/>
    <lineage>
        <taxon>Eukaryota</taxon>
        <taxon>Metazoa</taxon>
        <taxon>Chordata</taxon>
        <taxon>Craniata</taxon>
        <taxon>Vertebrata</taxon>
        <taxon>Euteleostomi</taxon>
        <taxon>Mammalia</taxon>
        <taxon>Eutheria</taxon>
        <taxon>Euarchontoglires</taxon>
        <taxon>Glires</taxon>
        <taxon>Rodentia</taxon>
        <taxon>Myomorpha</taxon>
        <taxon>Muroidea</taxon>
        <taxon>Muridae</taxon>
        <taxon>Murinae</taxon>
        <taxon>Mus</taxon>
        <taxon>Mus</taxon>
    </lineage>
</organism>